<keyword id="KW-0143">Chaperone</keyword>
<keyword id="KW-0963">Cytoplasm</keyword>
<keyword id="KW-0238">DNA-binding</keyword>
<reference key="1">
    <citation type="journal article" date="2008" name="J. Bacteriol.">
        <title>The complete genome sequence of Escherichia coli DH10B: insights into the biology of a laboratory workhorse.</title>
        <authorList>
            <person name="Durfee T."/>
            <person name="Nelson R."/>
            <person name="Baldwin S."/>
            <person name="Plunkett G. III"/>
            <person name="Burland V."/>
            <person name="Mau B."/>
            <person name="Petrosino J.F."/>
            <person name="Qin X."/>
            <person name="Muzny D.M."/>
            <person name="Ayele M."/>
            <person name="Gibbs R.A."/>
            <person name="Csorgo B."/>
            <person name="Posfai G."/>
            <person name="Weinstock G.M."/>
            <person name="Blattner F.R."/>
        </authorList>
    </citation>
    <scope>NUCLEOTIDE SEQUENCE [LARGE SCALE GENOMIC DNA]</scope>
    <source>
        <strain>K12 / DH10B</strain>
    </source>
</reference>
<sequence>MELKDYYAIMGVKPTDDLKTIKTAYRRLARKYHPDVSKEPDAEARFKEVAEAWEVLSDEQRRAEYDQMWQHRNDPQFNRQFHHGDGQSFNAEDFDDIFSSIFGQHARQSRQRPATRGHDIEIEVAVFLEETLTEHKRTISYNLPVYNAFGMIEQEIPKTLNVKIPAGVGNGQRIRLKGQGTPGENGGPNGDLWLVIHIAPHPLFDIVGQDLEIVVPVSPWEAALGAKVTVPTLKESILLTIPPGSQAGQRLRVKGKGLVSKKQTGDLYAVLKIVMPPKPDENTAALWQQLADAQSSFDPRKDWGKA</sequence>
<proteinExistence type="inferred from homology"/>
<organism>
    <name type="scientific">Escherichia coli (strain K12 / DH10B)</name>
    <dbReference type="NCBI Taxonomy" id="316385"/>
    <lineage>
        <taxon>Bacteria</taxon>
        <taxon>Pseudomonadati</taxon>
        <taxon>Pseudomonadota</taxon>
        <taxon>Gammaproteobacteria</taxon>
        <taxon>Enterobacterales</taxon>
        <taxon>Enterobacteriaceae</taxon>
        <taxon>Escherichia</taxon>
    </lineage>
</organism>
<comment type="function">
    <text evidence="1">DNA-binding protein that preferentially recognizes a curved DNA sequence. It is probably a functional analog of DnaJ; displays overlapping activities with DnaJ, but functions under different conditions, probably acting as a molecular chaperone in an adaptive response to environmental stresses other than heat shock. Lacks autonomous chaperone activity; binds native substrates and targets them for recognition by DnaK. Its activity is inhibited by the binding of CbpM.</text>
</comment>
<comment type="subcellular location">
    <subcellularLocation>
        <location evidence="1">Cytoplasm</location>
        <location evidence="1">Nucleoid</location>
    </subcellularLocation>
</comment>
<accession>B1X8V5</accession>
<evidence type="ECO:0000255" key="1">
    <source>
        <dbReference type="HAMAP-Rule" id="MF_01154"/>
    </source>
</evidence>
<feature type="chain" id="PRO_1000137749" description="Curved DNA-binding protein">
    <location>
        <begin position="1"/>
        <end position="306"/>
    </location>
</feature>
<feature type="domain" description="J" evidence="1">
    <location>
        <begin position="5"/>
        <end position="69"/>
    </location>
</feature>
<name>CBPA_ECODH</name>
<gene>
    <name evidence="1" type="primary">cbpA</name>
    <name type="ordered locus">ECDH10B_1072</name>
</gene>
<dbReference type="EMBL" id="CP000948">
    <property type="protein sequence ID" value="ACB02201.1"/>
    <property type="molecule type" value="Genomic_DNA"/>
</dbReference>
<dbReference type="RefSeq" id="WP_000420621.1">
    <property type="nucleotide sequence ID" value="NC_010473.1"/>
</dbReference>
<dbReference type="SMR" id="B1X8V5"/>
<dbReference type="GeneID" id="86863513"/>
<dbReference type="KEGG" id="ecd:ECDH10B_1072"/>
<dbReference type="HOGENOM" id="CLU_017633_0_0_6"/>
<dbReference type="GO" id="GO:0005737">
    <property type="term" value="C:cytoplasm"/>
    <property type="evidence" value="ECO:0007669"/>
    <property type="project" value="UniProtKB-UniRule"/>
</dbReference>
<dbReference type="GO" id="GO:0009295">
    <property type="term" value="C:nucleoid"/>
    <property type="evidence" value="ECO:0007669"/>
    <property type="project" value="UniProtKB-SubCell"/>
</dbReference>
<dbReference type="GO" id="GO:0003681">
    <property type="term" value="F:bent DNA binding"/>
    <property type="evidence" value="ECO:0007669"/>
    <property type="project" value="UniProtKB-UniRule"/>
</dbReference>
<dbReference type="GO" id="GO:0051082">
    <property type="term" value="F:unfolded protein binding"/>
    <property type="evidence" value="ECO:0007669"/>
    <property type="project" value="InterPro"/>
</dbReference>
<dbReference type="GO" id="GO:0051085">
    <property type="term" value="P:chaperone cofactor-dependent protein refolding"/>
    <property type="evidence" value="ECO:0007669"/>
    <property type="project" value="TreeGrafter"/>
</dbReference>
<dbReference type="GO" id="GO:0042026">
    <property type="term" value="P:protein refolding"/>
    <property type="evidence" value="ECO:0007669"/>
    <property type="project" value="TreeGrafter"/>
</dbReference>
<dbReference type="CDD" id="cd06257">
    <property type="entry name" value="DnaJ"/>
    <property type="match status" value="1"/>
</dbReference>
<dbReference type="CDD" id="cd10747">
    <property type="entry name" value="DnaJ_C"/>
    <property type="match status" value="1"/>
</dbReference>
<dbReference type="FunFam" id="1.10.287.110:FF:000013">
    <property type="entry name" value="Curved DNA-binding protein"/>
    <property type="match status" value="1"/>
</dbReference>
<dbReference type="FunFam" id="2.60.260.20:FF:000008">
    <property type="entry name" value="Curved DNA-binding protein"/>
    <property type="match status" value="1"/>
</dbReference>
<dbReference type="FunFam" id="2.60.260.20:FF:000010">
    <property type="entry name" value="Curved DNA-binding protein"/>
    <property type="match status" value="1"/>
</dbReference>
<dbReference type="Gene3D" id="1.10.287.110">
    <property type="entry name" value="DnaJ domain"/>
    <property type="match status" value="1"/>
</dbReference>
<dbReference type="Gene3D" id="1.20.5.460">
    <property type="entry name" value="Single helix bin"/>
    <property type="match status" value="1"/>
</dbReference>
<dbReference type="Gene3D" id="2.60.260.20">
    <property type="entry name" value="Urease metallochaperone UreE, N-terminal domain"/>
    <property type="match status" value="2"/>
</dbReference>
<dbReference type="HAMAP" id="MF_01154">
    <property type="entry name" value="CbpA"/>
    <property type="match status" value="1"/>
</dbReference>
<dbReference type="InterPro" id="IPR023859">
    <property type="entry name" value="DNA-bd_curved-DNA"/>
</dbReference>
<dbReference type="InterPro" id="IPR002939">
    <property type="entry name" value="DnaJ_C"/>
</dbReference>
<dbReference type="InterPro" id="IPR001623">
    <property type="entry name" value="DnaJ_domain"/>
</dbReference>
<dbReference type="InterPro" id="IPR018253">
    <property type="entry name" value="DnaJ_domain_CS"/>
</dbReference>
<dbReference type="InterPro" id="IPR008971">
    <property type="entry name" value="HSP40/DnaJ_pept-bd"/>
</dbReference>
<dbReference type="InterPro" id="IPR036869">
    <property type="entry name" value="J_dom_sf"/>
</dbReference>
<dbReference type="NCBIfam" id="NF007618">
    <property type="entry name" value="PRK10266.1"/>
    <property type="match status" value="1"/>
</dbReference>
<dbReference type="PANTHER" id="PTHR43096">
    <property type="entry name" value="DNAJ HOMOLOG 1, MITOCHONDRIAL-RELATED"/>
    <property type="match status" value="1"/>
</dbReference>
<dbReference type="PANTHER" id="PTHR43096:SF52">
    <property type="entry name" value="DNAJ HOMOLOG 1, MITOCHONDRIAL-RELATED"/>
    <property type="match status" value="1"/>
</dbReference>
<dbReference type="Pfam" id="PF00226">
    <property type="entry name" value="DnaJ"/>
    <property type="match status" value="1"/>
</dbReference>
<dbReference type="Pfam" id="PF01556">
    <property type="entry name" value="DnaJ_C"/>
    <property type="match status" value="1"/>
</dbReference>
<dbReference type="PRINTS" id="PR00625">
    <property type="entry name" value="JDOMAIN"/>
</dbReference>
<dbReference type="SMART" id="SM00271">
    <property type="entry name" value="DnaJ"/>
    <property type="match status" value="1"/>
</dbReference>
<dbReference type="SUPFAM" id="SSF46565">
    <property type="entry name" value="Chaperone J-domain"/>
    <property type="match status" value="1"/>
</dbReference>
<dbReference type="SUPFAM" id="SSF49493">
    <property type="entry name" value="HSP40/DnaJ peptide-binding domain"/>
    <property type="match status" value="2"/>
</dbReference>
<dbReference type="PROSITE" id="PS00636">
    <property type="entry name" value="DNAJ_1"/>
    <property type="match status" value="1"/>
</dbReference>
<dbReference type="PROSITE" id="PS50076">
    <property type="entry name" value="DNAJ_2"/>
    <property type="match status" value="1"/>
</dbReference>
<protein>
    <recommendedName>
        <fullName evidence="1">Curved DNA-binding protein</fullName>
    </recommendedName>
</protein>